<feature type="signal peptide" evidence="2">
    <location>
        <begin position="1"/>
        <end position="16"/>
    </location>
</feature>
<feature type="chain" id="PRO_5003782294" description="Class I hydrophobin D">
    <location>
        <begin position="17"/>
        <end position="89"/>
    </location>
</feature>
<feature type="glycosylation site" description="N-linked (GlcNAc...) asparagine" evidence="3">
    <location>
        <position position="36"/>
    </location>
</feature>
<feature type="disulfide bond" evidence="1">
    <location>
        <begin position="28"/>
        <end position="68"/>
    </location>
</feature>
<feature type="disulfide bond" evidence="1">
    <location>
        <begin position="39"/>
        <end position="60"/>
    </location>
</feature>
<feature type="disulfide bond" evidence="1">
    <location>
        <begin position="40"/>
        <end position="52"/>
    </location>
</feature>
<feature type="disulfide bond" evidence="1">
    <location>
        <begin position="69"/>
        <end position="85"/>
    </location>
</feature>
<protein>
    <recommendedName>
        <fullName evidence="5">Class I hydrophobin D</fullName>
    </recommendedName>
</protein>
<keyword id="KW-0134">Cell wall</keyword>
<keyword id="KW-0968">Cytoplasmic vesicle</keyword>
<keyword id="KW-1015">Disulfide bond</keyword>
<keyword id="KW-0325">Glycoprotein</keyword>
<keyword id="KW-1185">Reference proteome</keyword>
<keyword id="KW-0964">Secreted</keyword>
<keyword id="KW-0732">Signal</keyword>
<keyword id="KW-0926">Vacuole</keyword>
<name>HYD1D_BEAB2</name>
<reference key="1">
    <citation type="journal article" date="2012" name="Sci. Rep.">
        <title>Genomic perspectives on the evolution of fungal entomopathogenicity in Beauveria bassiana.</title>
        <authorList>
            <person name="Xiao G."/>
            <person name="Ying S.-H."/>
            <person name="Zheng P."/>
            <person name="Wang Z.-L."/>
            <person name="Zhang S."/>
            <person name="Xie X.-Q."/>
            <person name="Shang Y."/>
            <person name="St Leger R.J."/>
            <person name="Zhao G.-P."/>
            <person name="Wang C."/>
            <person name="Feng M.-G."/>
        </authorList>
    </citation>
    <scope>NUCLEOTIDE SEQUENCE [LARGE SCALE GENOMIC DNA]</scope>
    <source>
        <strain>ARSEF 2860</strain>
    </source>
</reference>
<reference key="2">
    <citation type="journal article" date="2025" name="Microbiol. Res.">
        <title>Deciphering roles of nine hydrophobins (Hyd1A-F and Hyd2A-C) in the asexual and insect-pathogenic lifecycles of Beauveria bassiana.</title>
        <authorList>
            <person name="Feng J.R."/>
            <person name="Li M."/>
            <person name="Ying S.H."/>
            <person name="Feng M.G."/>
        </authorList>
    </citation>
    <scope>FUNCTION</scope>
    <scope>SUBCELLULAR LOCATION</scope>
    <scope>DISRUPTION PHENOTYPE</scope>
</reference>
<dbReference type="EMBL" id="JH725207">
    <property type="protein sequence ID" value="EJP61475.1"/>
    <property type="molecule type" value="Genomic_DNA"/>
</dbReference>
<dbReference type="RefSeq" id="XP_008602873.1">
    <property type="nucleotide sequence ID" value="XM_008604651.1"/>
</dbReference>
<dbReference type="GeneID" id="19892566"/>
<dbReference type="HOGENOM" id="CLU_168414_1_0_1"/>
<dbReference type="InParanoid" id="J4VS95"/>
<dbReference type="OrthoDB" id="10937at474943"/>
<dbReference type="Proteomes" id="UP000002762">
    <property type="component" value="Unassembled WGS sequence"/>
</dbReference>
<gene>
    <name evidence="5" type="primary">hyd1D</name>
    <name type="ORF">BBA_09554</name>
</gene>
<proteinExistence type="evidence at transcript level"/>
<comment type="function">
    <text evidence="4 7">Aerial growth, conidiation, and dispersal of filamentous fungi in the environment rely upon a capability of their secreting small amphipathic proteins called hydrophobins (HPBs) with low sequence identity. Class I can self-assemble into an outermost layer of rodlet bundles on aerial cell surfaces, conferring cellular hydrophobicity that supports fungal growth, development and dispersal; whereas Class II form highly ordered films at water-air interfaces through intermolecular interactions but contribute nothing to the rodlet structure (Probable). Hyd1D contributes to certain cell wall-related features, such as hydrophobicity but is not involved in cell wall-related events during fungal proliferation in host hemocoel (PubMed:39724799). Does not contribute to conidial hydrophobicity (PubMed:39724799). Involved in insect hemocoel colonization independent of cell hydrophobicity (PubMed:39724799).</text>
</comment>
<comment type="subcellular location">
    <subcellularLocation>
        <location evidence="4">Secreted</location>
    </subcellularLocation>
    <subcellularLocation>
        <location evidence="4">Secreted</location>
        <location evidence="4">Cell wall</location>
    </subcellularLocation>
    <subcellularLocation>
        <location evidence="4">Vacuole</location>
    </subcellularLocation>
    <subcellularLocation>
        <location evidence="4">Cytoplasmic vesicle</location>
    </subcellularLocation>
    <text evidence="4">Accumulates exclusively on the cell walls of aerial hyphae and conidia and in the vacuoles and vesicles of hyphae and blastospores.</text>
</comment>
<comment type="induction">
    <text evidence="4">Under normal conditions on SDAY medium (Sabouraud dextrose agar plus 1% yeast extract), hyd1D is increasingly up-regulated during the period of incubation. Hyd1A is the most active at transcription level under normal culture conditions, followed by hyd1B, hyd1E, hyd2A and hyd2C in order.</text>
</comment>
<comment type="disruption phenotype">
    <text evidence="4">Stimulates conidial germination and virulence via insect hemocoel colonization (PubMed:39724799). Does not affect radial growth and multiple stress responses (PubMed:39724799).</text>
</comment>
<comment type="similarity">
    <text evidence="6">Belongs to the fungal hydrophobin family.</text>
</comment>
<evidence type="ECO:0000250" key="1">
    <source>
        <dbReference type="UniProtKB" id="Q04571"/>
    </source>
</evidence>
<evidence type="ECO:0000255" key="2"/>
<evidence type="ECO:0000255" key="3">
    <source>
        <dbReference type="PROSITE-ProRule" id="PRU00498"/>
    </source>
</evidence>
<evidence type="ECO:0000269" key="4">
    <source>
    </source>
</evidence>
<evidence type="ECO:0000303" key="5">
    <source>
    </source>
</evidence>
<evidence type="ECO:0000305" key="6"/>
<evidence type="ECO:0000305" key="7">
    <source>
    </source>
</evidence>
<organism>
    <name type="scientific">Beauveria bassiana (strain ARSEF 2860)</name>
    <name type="common">White muscardine disease fungus</name>
    <name type="synonym">Tritirachium shiotae</name>
    <dbReference type="NCBI Taxonomy" id="655819"/>
    <lineage>
        <taxon>Eukaryota</taxon>
        <taxon>Fungi</taxon>
        <taxon>Dikarya</taxon>
        <taxon>Ascomycota</taxon>
        <taxon>Pezizomycotina</taxon>
        <taxon>Sordariomycetes</taxon>
        <taxon>Hypocreomycetidae</taxon>
        <taxon>Hypocreales</taxon>
        <taxon>Cordycipitaceae</taxon>
        <taxon>Beauveria</taxon>
    </lineage>
</organism>
<sequence length="89" mass="8805">MKFSLATIALAAAVVASPTNPPTEAGSCNVKGKTGNVTCCNSAIPILGQLLCNVLASGTCNSGQSAYCCDTGGNTGLIVVQAVNCVELL</sequence>
<accession>J4VS95</accession>